<evidence type="ECO:0000250" key="1"/>
<evidence type="ECO:0000269" key="2">
    <source>
    </source>
</evidence>
<evidence type="ECO:0000269" key="3">
    <source>
    </source>
</evidence>
<evidence type="ECO:0000269" key="4">
    <source>
    </source>
</evidence>
<evidence type="ECO:0000269" key="5">
    <source>
    </source>
</evidence>
<evidence type="ECO:0000269" key="6">
    <source>
    </source>
</evidence>
<evidence type="ECO:0000269" key="7">
    <source>
    </source>
</evidence>
<evidence type="ECO:0000269" key="8">
    <source ref="8"/>
</evidence>
<evidence type="ECO:0007829" key="9">
    <source>
        <dbReference type="PDB" id="1OTK"/>
    </source>
</evidence>
<sequence length="248" mass="27877">MNQLTAYTLRLGDNCLVLSQRLGEWCGHAPELEIDLALANIGLDLLGQARNFLSYAAELAGEGDEDTLAFTRDERQFSNLLLVEQPNGNFADTIARQYFIDAWHVALFTRLMESRDPQLAAISAKAIKEARYHLRFSRGWLERLGNGTDVSGQKMQQAINKLWRFTAELFDADEIDIALSEEGIAVDPRTLRAAWEAEVFAGINEATLNVPQEQAYRTGGKKGLHTEHLGPMLAEMQYLQRVLPGQQW</sequence>
<reference key="1">
    <citation type="journal article" date="1998" name="J. Biol. Chem.">
        <title>Catabolism of phenylacetic acid in Escherichia coli. Characterization of a new aerobic hybrid pathway.</title>
        <authorList>
            <person name="Ferrandez A."/>
            <person name="Minambres B."/>
            <person name="Garcia B."/>
            <person name="Olivera E.R."/>
            <person name="Luengo J.M."/>
            <person name="Garcia J.L."/>
            <person name="Diaz E."/>
        </authorList>
    </citation>
    <scope>NUCLEOTIDE SEQUENCE [GENOMIC DNA]</scope>
    <scope>FUNCTION IN PHENYLACETATE CATABOLISM</scope>
    <scope>INDUCTION</scope>
    <source>
        <strain>W / ATCC 11105 / DSM 1900</strain>
    </source>
</reference>
<reference key="2">
    <citation type="journal article" date="1997" name="Science">
        <title>The complete genome sequence of Escherichia coli K-12.</title>
        <authorList>
            <person name="Blattner F.R."/>
            <person name="Plunkett G. III"/>
            <person name="Bloch C.A."/>
            <person name="Perna N.T."/>
            <person name="Burland V."/>
            <person name="Riley M."/>
            <person name="Collado-Vides J."/>
            <person name="Glasner J.D."/>
            <person name="Rode C.K."/>
            <person name="Mayhew G.F."/>
            <person name="Gregor J."/>
            <person name="Davis N.W."/>
            <person name="Kirkpatrick H.A."/>
            <person name="Goeden M.A."/>
            <person name="Rose D.J."/>
            <person name="Mau B."/>
            <person name="Shao Y."/>
        </authorList>
    </citation>
    <scope>NUCLEOTIDE SEQUENCE [LARGE SCALE GENOMIC DNA]</scope>
    <source>
        <strain>K12 / MG1655 / ATCC 47076</strain>
    </source>
</reference>
<reference key="3">
    <citation type="journal article" date="2006" name="Mol. Syst. Biol.">
        <title>Highly accurate genome sequences of Escherichia coli K-12 strains MG1655 and W3110.</title>
        <authorList>
            <person name="Hayashi K."/>
            <person name="Morooka N."/>
            <person name="Yamamoto Y."/>
            <person name="Fujita K."/>
            <person name="Isono K."/>
            <person name="Choi S."/>
            <person name="Ohtsubo E."/>
            <person name="Baba T."/>
            <person name="Wanner B.L."/>
            <person name="Mori H."/>
            <person name="Horiuchi T."/>
        </authorList>
    </citation>
    <scope>NUCLEOTIDE SEQUENCE [LARGE SCALE GENOMIC DNA]</scope>
    <source>
        <strain>K12 / W3110 / ATCC 27325 / DSM 5911</strain>
    </source>
</reference>
<reference key="4">
    <citation type="journal article" date="2000" name="J. Biol. Chem.">
        <title>Transcriptional regulation of the divergent paa catabolic operons for phenylacetic acid degradation in Escherichia coli.</title>
        <authorList>
            <person name="Ferrandez A."/>
            <person name="Garcia J.L."/>
            <person name="Diaz E."/>
        </authorList>
    </citation>
    <scope>TRANSCRIPTIONAL REGULATION</scope>
</reference>
<reference key="5">
    <citation type="journal article" date="2006" name="Appl. Environ. Microbiol.">
        <title>Genetic characterization of the phenylacetyl-coenzyme A oxygenase from the aerobic phenylacetic acid degradation pathway of Escherichia coli.</title>
        <authorList>
            <person name="Fernandez C."/>
            <person name="Ferrandez A."/>
            <person name="Minambres B."/>
            <person name="Diaz E."/>
            <person name="Garcia J.L."/>
        </authorList>
    </citation>
    <scope>FUNCTION AS A MONOOXYGENASE COMPONENT</scope>
</reference>
<reference key="6">
    <citation type="journal article" date="2010" name="Acta Crystallogr. F">
        <title>Crystallization and preliminary X-ray analysis of PaaAC, the main component of the hydroxylase of the Escherichia coli phenylacetyl-coenzyme A oxygenase complex.</title>
        <authorList>
            <person name="Grishin A.M."/>
            <person name="Ajamian E."/>
            <person name="Zhang L."/>
            <person name="Cygler M."/>
        </authorList>
    </citation>
    <scope>SUBUNIT</scope>
</reference>
<reference key="7">
    <citation type="journal article" date="2010" name="Proc. Natl. Acad. Sci. U.S.A.">
        <title>Bacterial phenylalanine and phenylacetate catabolic pathway revealed.</title>
        <authorList>
            <person name="Teufel R."/>
            <person name="Mascaraque V."/>
            <person name="Ismail W."/>
            <person name="Voss M."/>
            <person name="Perera J."/>
            <person name="Eisenreich W."/>
            <person name="Haehnel W."/>
            <person name="Fuchs G."/>
        </authorList>
    </citation>
    <scope>FUNCTION AS A MONOOXYGENASE COMPONENT</scope>
</reference>
<reference key="8">
    <citation type="submission" date="2011-07" db="PDB data bank">
        <title>The 2 a crystal structure of protein paac from e. coli.</title>
        <authorList>
            <consortium name="Midwest center for structural genomics (MCSG)"/>
        </authorList>
    </citation>
    <scope>X-RAY CRYSTALLOGRAPHY (2.0 ANGSTROMS) OF 2-248</scope>
    <scope>SUBUNIT</scope>
</reference>
<reference key="9">
    <citation type="journal article" date="2011" name="J. Biol. Chem.">
        <title>Structural and functional studies of the Escherichia coli phenylacetyl-CoA monooxygenase complex.</title>
        <authorList>
            <person name="Grishin A.M."/>
            <person name="Ajamian E."/>
            <person name="Tao L."/>
            <person name="Zhang L."/>
            <person name="Menard R."/>
            <person name="Cygler M."/>
        </authorList>
    </citation>
    <scope>X-RAY CRYSTALLOGRAPHY (2.25 ANGSTROMS) OF 2-248 IN COMPLEX WITH SUBSTRATE ANALOGS</scope>
    <scope>SUBUNIT</scope>
</reference>
<proteinExistence type="evidence at protein level"/>
<comment type="function">
    <text evidence="3 4 7">Component of 1,2-phenylacetyl-CoA epoxidase multicomponent enzyme system which catalyzes the reduction of phenylacetyl-CoA (PA-CoA) to form 1,2-epoxyphenylacetyl-CoA. The subunit C may be essential for structural integrity of the alpha subunit.</text>
</comment>
<comment type="pathway">
    <text>Aromatic compound metabolism; phenylacetate degradation.</text>
</comment>
<comment type="subunit">
    <text evidence="5 6 8">Forms a stable heterotetramer (dimer of heterodimers) with PaaA and a stable heterodimer with PaaB.</text>
</comment>
<comment type="interaction">
    <interactant intactId="EBI-1131666">
        <id>P76079</id>
    </interactant>
    <interactant intactId="EBI-1119284">
        <id>P0AEF4</id>
        <label>dpiA</label>
    </interactant>
    <organismsDiffer>false</organismsDiffer>
    <experiments>4</experiments>
</comment>
<comment type="interaction">
    <interactant intactId="EBI-1131666">
        <id>P76079</id>
    </interactant>
    <interactant intactId="EBI-1119536">
        <id>P76077</id>
        <label>paaA</label>
    </interactant>
    <organismsDiffer>false</organismsDiffer>
    <experiments>6</experiments>
</comment>
<comment type="interaction">
    <interactant intactId="EBI-1131666">
        <id>P76079</id>
    </interactant>
    <interactant intactId="EBI-1123811">
        <id>P76078</id>
        <label>paaB</label>
    </interactant>
    <organismsDiffer>false</organismsDiffer>
    <experiments>2</experiments>
</comment>
<comment type="induction">
    <text evidence="2 7">Activated by cAMP receptor protein (CRP), integration host factor (IHF) and by phenylacetyl-coenzyme A (PA-CoA) that prevents PaaX from binding its target sequences. Inhibited by PaaX.</text>
</comment>
<gene>
    <name type="primary">paaC</name>
    <name type="synonym">ydbP</name>
    <name type="ordered locus">b1390</name>
    <name type="ordered locus">JW1385</name>
</gene>
<keyword id="KW-0002">3D-structure</keyword>
<keyword id="KW-1185">Reference proteome</keyword>
<protein>
    <recommendedName>
        <fullName>1,2-phenylacetyl-CoA epoxidase, subunit C</fullName>
    </recommendedName>
    <alternativeName>
        <fullName>1,2-phenylacetyl-CoA epoxidase, structural subunit beta</fullName>
    </alternativeName>
    <alternativeName>
        <fullName>1,2-phenylacetyl-CoA monooxygenase, subunit C</fullName>
    </alternativeName>
</protein>
<organism>
    <name type="scientific">Escherichia coli (strain K12)</name>
    <dbReference type="NCBI Taxonomy" id="83333"/>
    <lineage>
        <taxon>Bacteria</taxon>
        <taxon>Pseudomonadati</taxon>
        <taxon>Pseudomonadota</taxon>
        <taxon>Gammaproteobacteria</taxon>
        <taxon>Enterobacterales</taxon>
        <taxon>Enterobacteriaceae</taxon>
        <taxon>Escherichia</taxon>
    </lineage>
</organism>
<name>PAAC_ECOLI</name>
<dbReference type="EMBL" id="X97452">
    <property type="protein sequence ID" value="CAA66092.1"/>
    <property type="molecule type" value="Genomic_DNA"/>
</dbReference>
<dbReference type="EMBL" id="U00096">
    <property type="protein sequence ID" value="AAC74472.1"/>
    <property type="molecule type" value="Genomic_DNA"/>
</dbReference>
<dbReference type="EMBL" id="AP009048">
    <property type="protein sequence ID" value="BAE76425.1"/>
    <property type="molecule type" value="Genomic_DNA"/>
</dbReference>
<dbReference type="PIR" id="A64890">
    <property type="entry name" value="A64890"/>
</dbReference>
<dbReference type="RefSeq" id="NP_415908.1">
    <property type="nucleotide sequence ID" value="NC_000913.3"/>
</dbReference>
<dbReference type="RefSeq" id="WP_001072837.1">
    <property type="nucleotide sequence ID" value="NZ_STEB01000005.1"/>
</dbReference>
<dbReference type="PDB" id="1OTK">
    <property type="method" value="X-ray"/>
    <property type="resolution" value="2.00 A"/>
    <property type="chains" value="A/B=2-248"/>
</dbReference>
<dbReference type="PDB" id="3PVR">
    <property type="method" value="X-ray"/>
    <property type="resolution" value="2.10 A"/>
    <property type="chains" value="B/C=2-248"/>
</dbReference>
<dbReference type="PDB" id="3PVT">
    <property type="method" value="X-ray"/>
    <property type="resolution" value="2.03 A"/>
    <property type="chains" value="B/C=2-248"/>
</dbReference>
<dbReference type="PDB" id="3PVY">
    <property type="method" value="X-ray"/>
    <property type="resolution" value="2.15 A"/>
    <property type="chains" value="B/C=2-248"/>
</dbReference>
<dbReference type="PDB" id="3PW1">
    <property type="method" value="X-ray"/>
    <property type="resolution" value="2.25 A"/>
    <property type="chains" value="B/C=2-248"/>
</dbReference>
<dbReference type="PDB" id="3PW8">
    <property type="method" value="X-ray"/>
    <property type="resolution" value="2.97 A"/>
    <property type="chains" value="A/B=2-248"/>
</dbReference>
<dbReference type="PDB" id="3PWQ">
    <property type="method" value="X-ray"/>
    <property type="resolution" value="2.65 A"/>
    <property type="chains" value="A/B/E/G/I/J/K/R=2-248"/>
</dbReference>
<dbReference type="PDB" id="4II4">
    <property type="method" value="X-ray"/>
    <property type="resolution" value="2.80 A"/>
    <property type="chains" value="B/C=2-248"/>
</dbReference>
<dbReference type="PDBsum" id="1OTK"/>
<dbReference type="PDBsum" id="3PVR"/>
<dbReference type="PDBsum" id="3PVT"/>
<dbReference type="PDBsum" id="3PVY"/>
<dbReference type="PDBsum" id="3PW1"/>
<dbReference type="PDBsum" id="3PW8"/>
<dbReference type="PDBsum" id="3PWQ"/>
<dbReference type="PDBsum" id="4II4"/>
<dbReference type="SMR" id="P76079"/>
<dbReference type="BioGRID" id="4260175">
    <property type="interactions" value="103"/>
</dbReference>
<dbReference type="BioGRID" id="850320">
    <property type="interactions" value="5"/>
</dbReference>
<dbReference type="ComplexPortal" id="CPX-2844">
    <property type="entry name" value="paaABCE phenylacetyl-CoA monooxygenase complex"/>
</dbReference>
<dbReference type="FunCoup" id="P76079">
    <property type="interactions" value="180"/>
</dbReference>
<dbReference type="IntAct" id="P76079">
    <property type="interactions" value="9"/>
</dbReference>
<dbReference type="STRING" id="511145.b1390"/>
<dbReference type="PaxDb" id="511145-b1390"/>
<dbReference type="EnsemblBacteria" id="AAC74472">
    <property type="protein sequence ID" value="AAC74472"/>
    <property type="gene ID" value="b1390"/>
</dbReference>
<dbReference type="GeneID" id="945956"/>
<dbReference type="KEGG" id="ecj:JW1385"/>
<dbReference type="KEGG" id="eco:b1390"/>
<dbReference type="KEGG" id="ecoc:C3026_08115"/>
<dbReference type="PATRIC" id="fig|1411691.4.peg.881"/>
<dbReference type="EchoBASE" id="EB3500"/>
<dbReference type="eggNOG" id="COG3396">
    <property type="taxonomic scope" value="Bacteria"/>
</dbReference>
<dbReference type="HOGENOM" id="CLU_070585_0_0_6"/>
<dbReference type="InParanoid" id="P76079"/>
<dbReference type="OMA" id="WRFTGEL"/>
<dbReference type="OrthoDB" id="9789947at2"/>
<dbReference type="PhylomeDB" id="P76079"/>
<dbReference type="BioCyc" id="EcoCyc:G6711-MONOMER"/>
<dbReference type="BioCyc" id="MetaCyc:G6711-MONOMER"/>
<dbReference type="BRENDA" id="1.14.13.149">
    <property type="organism ID" value="2026"/>
</dbReference>
<dbReference type="UniPathway" id="UPA00930"/>
<dbReference type="EvolutionaryTrace" id="P76079"/>
<dbReference type="PRO" id="PR:P76079"/>
<dbReference type="Proteomes" id="UP000000625">
    <property type="component" value="Chromosome"/>
</dbReference>
<dbReference type="GO" id="GO:0005829">
    <property type="term" value="C:cytosol"/>
    <property type="evidence" value="ECO:0000314"/>
    <property type="project" value="EcoCyc"/>
</dbReference>
<dbReference type="GO" id="GO:0062077">
    <property type="term" value="C:phenylacetyl-CoA 1,2-epoxidase complex"/>
    <property type="evidence" value="ECO:0000353"/>
    <property type="project" value="ComplexPortal"/>
</dbReference>
<dbReference type="GO" id="GO:0010124">
    <property type="term" value="P:phenylacetate catabolic process"/>
    <property type="evidence" value="ECO:0000314"/>
    <property type="project" value="ComplexPortal"/>
</dbReference>
<dbReference type="FunFam" id="1.20.1260.10:FF:000012">
    <property type="entry name" value="1,2-phenylacetyl-CoA epoxidase, subunit C"/>
    <property type="match status" value="1"/>
</dbReference>
<dbReference type="Gene3D" id="1.20.1260.10">
    <property type="match status" value="1"/>
</dbReference>
<dbReference type="InterPro" id="IPR052703">
    <property type="entry name" value="Aromatic_CoA_ox/epox"/>
</dbReference>
<dbReference type="InterPro" id="IPR012347">
    <property type="entry name" value="Ferritin-like"/>
</dbReference>
<dbReference type="InterPro" id="IPR009078">
    <property type="entry name" value="Ferritin-like_SF"/>
</dbReference>
<dbReference type="InterPro" id="IPR007814">
    <property type="entry name" value="PaaA_PaaC"/>
</dbReference>
<dbReference type="InterPro" id="IPR011882">
    <property type="entry name" value="PaaC"/>
</dbReference>
<dbReference type="NCBIfam" id="TIGR02158">
    <property type="entry name" value="PA_CoA_Oxy3"/>
    <property type="match status" value="1"/>
</dbReference>
<dbReference type="PANTHER" id="PTHR30458:SF0">
    <property type="entry name" value="1,2-PHENYLACETYL-COA EPOXIDASE, SUBUNIT C"/>
    <property type="match status" value="1"/>
</dbReference>
<dbReference type="PANTHER" id="PTHR30458">
    <property type="entry name" value="PHENYLACETIC ACID DEGRADATION PROTEIN PAA"/>
    <property type="match status" value="1"/>
</dbReference>
<dbReference type="Pfam" id="PF05138">
    <property type="entry name" value="PaaA_PaaC"/>
    <property type="match status" value="1"/>
</dbReference>
<dbReference type="PIRSF" id="PIRSF037834">
    <property type="entry name" value="PA_CoA_Oase3"/>
    <property type="match status" value="1"/>
</dbReference>
<dbReference type="SUPFAM" id="SSF47240">
    <property type="entry name" value="Ferritin-like"/>
    <property type="match status" value="1"/>
</dbReference>
<accession>P76079</accession>
<accession>O53011</accession>
<accession>Q2MBD1</accession>
<feature type="chain" id="PRO_0000058161" description="1,2-phenylacetyl-CoA epoxidase, subunit C">
    <location>
        <begin position="1"/>
        <end position="248"/>
    </location>
</feature>
<feature type="binding site" evidence="1">
    <location>
        <begin position="76"/>
        <end position="79"/>
    </location>
    <ligand>
        <name>substrate</name>
    </ligand>
</feature>
<feature type="binding site" evidence="1">
    <location>
        <begin position="177"/>
        <end position="179"/>
    </location>
    <ligand>
        <name>substrate</name>
    </ligand>
</feature>
<feature type="sequence variant" description="In strain: W.">
    <original>N</original>
    <variation>D</variation>
    <location>
        <position position="160"/>
    </location>
</feature>
<feature type="helix" evidence="9">
    <location>
        <begin position="2"/>
        <end position="23"/>
    </location>
</feature>
<feature type="turn" evidence="9">
    <location>
        <begin position="24"/>
        <end position="28"/>
    </location>
</feature>
<feature type="strand" evidence="9">
    <location>
        <begin position="29"/>
        <end position="31"/>
    </location>
</feature>
<feature type="helix" evidence="9">
    <location>
        <begin position="32"/>
        <end position="60"/>
    </location>
</feature>
<feature type="helix" evidence="9">
    <location>
        <begin position="65"/>
        <end position="70"/>
    </location>
</feature>
<feature type="helix" evidence="9">
    <location>
        <begin position="74"/>
        <end position="76"/>
    </location>
</feature>
<feature type="helix" evidence="9">
    <location>
        <begin position="81"/>
        <end position="84"/>
    </location>
</feature>
<feature type="helix" evidence="9">
    <location>
        <begin position="90"/>
        <end position="111"/>
    </location>
</feature>
<feature type="helix" evidence="9">
    <location>
        <begin position="117"/>
        <end position="145"/>
    </location>
</feature>
<feature type="helix" evidence="9">
    <location>
        <begin position="149"/>
        <end position="162"/>
    </location>
</feature>
<feature type="helix" evidence="9">
    <location>
        <begin position="163"/>
        <end position="165"/>
    </location>
</feature>
<feature type="helix" evidence="9">
    <location>
        <begin position="167"/>
        <end position="170"/>
    </location>
</feature>
<feature type="helix" evidence="9">
    <location>
        <begin position="174"/>
        <end position="181"/>
    </location>
</feature>
<feature type="helix" evidence="9">
    <location>
        <begin position="188"/>
        <end position="191"/>
    </location>
</feature>
<feature type="helix" evidence="9">
    <location>
        <begin position="192"/>
        <end position="205"/>
    </location>
</feature>
<feature type="helix" evidence="9">
    <location>
        <begin position="220"/>
        <end position="222"/>
    </location>
</feature>
<feature type="helix" evidence="9">
    <location>
        <begin position="229"/>
        <end position="242"/>
    </location>
</feature>